<name>XYNA_PENCN</name>
<sequence>MVQLKTAALALLFAGQALSGPVDSRQASVSIDAKFKAHGKKYLGTIGDQYTLTKNTKNPAIIKADFGQLTPENSMKWDATEPNRGQFTFSGSDYLVNFAQSNGKLIRGHTLVWHSQLPGWVSSITDKNTLISVLKNHITTVMTRYKGKIYAWDVLNEIFNEDGSLRNSVFYNVIGEDYVRIAFETARSVDPNAKLYINDYNLDSAGYSKVNGMVSHVKKWLAAGIPIDGIGSQTHLGAGAGSAVAGALNALASAGTKEIAITELDIAGASSTDYVNVVNACLNQAKCVGITVWGVADPDSWRSSSSPLLFDGNYNPKAAYNAIANAL</sequence>
<organism>
    <name type="scientific">Penicillium canescens</name>
    <dbReference type="NCBI Taxonomy" id="5083"/>
    <lineage>
        <taxon>Eukaryota</taxon>
        <taxon>Fungi</taxon>
        <taxon>Dikarya</taxon>
        <taxon>Ascomycota</taxon>
        <taxon>Pezizomycotina</taxon>
        <taxon>Eurotiomycetes</taxon>
        <taxon>Eurotiomycetidae</taxon>
        <taxon>Eurotiales</taxon>
        <taxon>Aspergillaceae</taxon>
        <taxon>Penicillium</taxon>
    </lineage>
</organism>
<dbReference type="EC" id="3.2.1.8"/>
<dbReference type="EMBL" id="AY756109">
    <property type="protein sequence ID" value="AAV65488.1"/>
    <property type="molecule type" value="Genomic_DNA"/>
</dbReference>
<dbReference type="SMR" id="Q5S7A8"/>
<dbReference type="CAZy" id="GH10">
    <property type="family name" value="Glycoside Hydrolase Family 10"/>
</dbReference>
<dbReference type="UniPathway" id="UPA00114"/>
<dbReference type="GO" id="GO:0005576">
    <property type="term" value="C:extracellular region"/>
    <property type="evidence" value="ECO:0007669"/>
    <property type="project" value="UniProtKB-SubCell"/>
</dbReference>
<dbReference type="GO" id="GO:0031176">
    <property type="term" value="F:endo-1,4-beta-xylanase activity"/>
    <property type="evidence" value="ECO:0007669"/>
    <property type="project" value="UniProtKB-EC"/>
</dbReference>
<dbReference type="GO" id="GO:0045493">
    <property type="term" value="P:xylan catabolic process"/>
    <property type="evidence" value="ECO:0007669"/>
    <property type="project" value="UniProtKB-UniPathway"/>
</dbReference>
<dbReference type="FunFam" id="3.20.20.80:FF:000094">
    <property type="entry name" value="Endo-1,4-beta-xylanase"/>
    <property type="match status" value="1"/>
</dbReference>
<dbReference type="Gene3D" id="3.20.20.80">
    <property type="entry name" value="Glycosidases"/>
    <property type="match status" value="1"/>
</dbReference>
<dbReference type="InterPro" id="IPR044846">
    <property type="entry name" value="GH10"/>
</dbReference>
<dbReference type="InterPro" id="IPR031158">
    <property type="entry name" value="GH10_AS"/>
</dbReference>
<dbReference type="InterPro" id="IPR001000">
    <property type="entry name" value="GH10_dom"/>
</dbReference>
<dbReference type="InterPro" id="IPR017853">
    <property type="entry name" value="Glycoside_hydrolase_SF"/>
</dbReference>
<dbReference type="PANTHER" id="PTHR31490:SF76">
    <property type="entry name" value="ENDO-1,4-BETA-XYLANASE C"/>
    <property type="match status" value="1"/>
</dbReference>
<dbReference type="PANTHER" id="PTHR31490">
    <property type="entry name" value="GLYCOSYL HYDROLASE"/>
    <property type="match status" value="1"/>
</dbReference>
<dbReference type="Pfam" id="PF00331">
    <property type="entry name" value="Glyco_hydro_10"/>
    <property type="match status" value="1"/>
</dbReference>
<dbReference type="PRINTS" id="PR00134">
    <property type="entry name" value="GLHYDRLASE10"/>
</dbReference>
<dbReference type="SMART" id="SM00633">
    <property type="entry name" value="Glyco_10"/>
    <property type="match status" value="1"/>
</dbReference>
<dbReference type="SUPFAM" id="SSF51445">
    <property type="entry name" value="(Trans)glycosidases"/>
    <property type="match status" value="1"/>
</dbReference>
<dbReference type="PROSITE" id="PS00591">
    <property type="entry name" value="GH10_1"/>
    <property type="match status" value="1"/>
</dbReference>
<dbReference type="PROSITE" id="PS51760">
    <property type="entry name" value="GH10_2"/>
    <property type="match status" value="1"/>
</dbReference>
<protein>
    <recommendedName>
        <fullName>Endo-1,4-beta-xylanase A</fullName>
        <shortName>Xylanase A</shortName>
        <ecNumber>3.2.1.8</ecNumber>
    </recommendedName>
    <alternativeName>
        <fullName>1,4-beta-D-xylan xylanohydrolase A</fullName>
    </alternativeName>
</protein>
<evidence type="ECO:0000250" key="1"/>
<evidence type="ECO:0000255" key="2"/>
<evidence type="ECO:0000255" key="3">
    <source>
        <dbReference type="PROSITE-ProRule" id="PRU01096"/>
    </source>
</evidence>
<evidence type="ECO:0000255" key="4">
    <source>
        <dbReference type="PROSITE-ProRule" id="PRU10061"/>
    </source>
</evidence>
<evidence type="ECO:0000269" key="5">
    <source>
    </source>
</evidence>
<evidence type="ECO:0000305" key="6"/>
<reference key="1">
    <citation type="journal article" date="2002" name="Appl. Biochem. Microbiol.">
        <title>Cloning of an endo-1,4-beta-xylanase gene from Penicillium canescens and construction of multicopy strains.</title>
        <authorList>
            <person name="Serebrianyi V.A."/>
            <person name="Vavilova E.A."/>
            <person name="Chulkin A.M."/>
            <person name="Vinetskii I.U.P."/>
        </authorList>
    </citation>
    <scope>NUCLEOTIDE SEQUENCE [GENOMIC DNA]</scope>
    <scope>SUBCELLULAR LOCATION</scope>
    <scope>FUNCTION</scope>
    <scope>CATALYTIC ACTIVITY</scope>
    <scope>INDUCTION</scope>
    <source>
        <strain>F178</strain>
    </source>
</reference>
<gene>
    <name type="primary">xylA</name>
</gene>
<keyword id="KW-0119">Carbohydrate metabolism</keyword>
<keyword id="KW-1015">Disulfide bond</keyword>
<keyword id="KW-0326">Glycosidase</keyword>
<keyword id="KW-0378">Hydrolase</keyword>
<keyword id="KW-0624">Polysaccharide degradation</keyword>
<keyword id="KW-0964">Secreted</keyword>
<keyword id="KW-0732">Signal</keyword>
<keyword id="KW-0858">Xylan degradation</keyword>
<proteinExistence type="evidence at protein level"/>
<comment type="function">
    <text evidence="5">Endo-1,4-beta-xylanase involved in the hydrolysis of xylan, a major structural heterogeneous polysaccharide found in plant biomass representing the second most abundant polysaccharide in the biosphere, after cellulose.</text>
</comment>
<comment type="catalytic activity">
    <reaction evidence="5">
        <text>Endohydrolysis of (1-&gt;4)-beta-D-xylosidic linkages in xylans.</text>
        <dbReference type="EC" id="3.2.1.8"/>
    </reaction>
</comment>
<comment type="pathway">
    <text>Glycan degradation; xylan degradation.</text>
</comment>
<comment type="subcellular location">
    <subcellularLocation>
        <location evidence="5">Secreted</location>
    </subcellularLocation>
</comment>
<comment type="induction">
    <text evidence="5">Nucleotide sequences for binding catabolite repression protein CREA were detected in the promoter region.</text>
</comment>
<comment type="similarity">
    <text evidence="6">Belongs to the glycosyl hydrolase 10 (cellulase F) family.</text>
</comment>
<feature type="signal peptide" evidence="2">
    <location>
        <begin position="1"/>
        <end position="19"/>
    </location>
</feature>
<feature type="chain" id="PRO_0000429614" description="Endo-1,4-beta-xylanase A">
    <location>
        <begin position="20"/>
        <end position="327"/>
    </location>
</feature>
<feature type="domain" description="GH10" evidence="3">
    <location>
        <begin position="46"/>
        <end position="326"/>
    </location>
</feature>
<feature type="active site" description="Proton donor" evidence="1">
    <location>
        <position position="157"/>
    </location>
</feature>
<feature type="active site" description="Nucleophile" evidence="4">
    <location>
        <position position="263"/>
    </location>
</feature>
<feature type="disulfide bond" evidence="1">
    <location>
        <begin position="281"/>
        <end position="287"/>
    </location>
</feature>
<accession>Q5S7A8</accession>